<organism>
    <name type="scientific">Sus scrofa</name>
    <name type="common">Pig</name>
    <dbReference type="NCBI Taxonomy" id="9823"/>
    <lineage>
        <taxon>Eukaryota</taxon>
        <taxon>Metazoa</taxon>
        <taxon>Chordata</taxon>
        <taxon>Craniata</taxon>
        <taxon>Vertebrata</taxon>
        <taxon>Euteleostomi</taxon>
        <taxon>Mammalia</taxon>
        <taxon>Eutheria</taxon>
        <taxon>Laurasiatheria</taxon>
        <taxon>Artiodactyla</taxon>
        <taxon>Suina</taxon>
        <taxon>Suidae</taxon>
        <taxon>Sus</taxon>
    </lineage>
</organism>
<accession>O97939</accession>
<sequence length="1142" mass="128352">MLLSCRHGASSPKLDNLVPSGKMKILLVFLGLLCYSAAMPMQMPRMPGFSSKSEEMMRYGHFNFMNAPHMAHLGTLYGNGMQLPQFFPQYQMPMWPQPPPNKKHPQKPSASKQQSKTDPAPESQKPNQPQPKTPTPKQPLNEPSPTPTQPEEETQTPQAFPPFGNGLFPYQQPLWHVPHRIPPGYGRPPTSNEEGGNPYFGFFGYHGFGGRPPYYSEEMFEQDFEKPKEKDPPKTETPATEPSVNTTVPETNSTQPNAPNPRGNDTSPTGTSGQGPNPRSNPTGQNGPAVNVSGQGVPRSQSPWGPRQTIIHENYPNPNIRGFPARRQWRPPGPAMGHRRNGPFYRNQQIQRGPRWNSFTLEGKQAVRPGYPTYRRVYGSTARSNPPNYAGNSANLRRKPEGPNKNPMVTNVAPPGPKHGTVDQNENIQNPREKQVSQKERTVVPTRDPSGPWRNSQDYGINKSNYKLPQPEDNMLVPNFNSIDQRENSYYPRGESKRAPNSDGQTQTQIIPKGIVLEPRRIPYESETNQPELKHSAYQPVYTEGIPSPAKEHFPAGRNTWNQQEISPPFKEDPGRQEEHLPHLSHGSRVHVYYPDYNPYDPRENSPYLRSNTWYERDDSPNTMGQPENPHYPMNTPDPKETIPYNEEDPIDPTGDEHFPGQSRWDMEELSFKEDPTVRHYEGEQYTSNQPKEYLPYSLDNPSKPREDFLYGEFYPWNPEENFPSYNTAPTVSSPVESRGYYANNAVGQEESTMFPSWSSWDPRIQAQGQKEGRPYLNRNFWDQSTNLYKTPTSSPHQKENQPYSNNSPAGLQKNPTWHEGENLNYGMQITRLNSPERDHLAFPDLIPPDYPGGQKESHVFHLSQRGPCCAGGSMWPKNNPLALQDYTQSFGLAPGENPDTSIGYAEDSHIKYARQTVSPTSIVPGQRNSSEKILPGESQNPSPFKDDVSTLRRSTPCSVKSQLSQRGIMPLPEANSLQSKNTPCLTSDLGGDGNNVLEQIFEGNQLNERTVDLTPEQLVFGTPDKEPRPEGIPNEMQGNESERQQQRQSSILQLPCFGSKLANYHTSSIGTPSSLGRQDSFDGDPIMPTETPNSLAGLATGAQFQNINVDPLNEDEHTPFDSLQIGTNPQDQVQDCLLLQA</sequence>
<dbReference type="EMBL" id="U52196">
    <property type="protein sequence ID" value="AAD10837.1"/>
    <property type="molecule type" value="mRNA"/>
</dbReference>
<dbReference type="PIR" id="T37455">
    <property type="entry name" value="T37455"/>
</dbReference>
<dbReference type="RefSeq" id="NP_999406.1">
    <property type="nucleotide sequence ID" value="NM_214241.1"/>
</dbReference>
<dbReference type="FunCoup" id="O97939">
    <property type="interactions" value="94"/>
</dbReference>
<dbReference type="STRING" id="9823.ENSSSCP00000063311"/>
<dbReference type="GlyConnect" id="1">
    <property type="glycosylation" value="8 N-Linked glycans"/>
</dbReference>
<dbReference type="GlyCosmos" id="O97939">
    <property type="glycosylation" value="7 sites, 14 glycans"/>
</dbReference>
<dbReference type="GlyGen" id="O97939">
    <property type="glycosylation" value="9 sites"/>
</dbReference>
<dbReference type="iPTMnet" id="O97939"/>
<dbReference type="PaxDb" id="9823-ENSSSCP00000009538"/>
<dbReference type="GeneID" id="397473"/>
<dbReference type="KEGG" id="ssc:397473"/>
<dbReference type="CTD" id="10117"/>
<dbReference type="eggNOG" id="ENOG502R69E">
    <property type="taxonomic scope" value="Eukaryota"/>
</dbReference>
<dbReference type="InParanoid" id="O97939"/>
<dbReference type="OrthoDB" id="9900243at2759"/>
<dbReference type="Proteomes" id="UP000008227">
    <property type="component" value="Unplaced"/>
</dbReference>
<dbReference type="Proteomes" id="UP000314985">
    <property type="component" value="Unplaced"/>
</dbReference>
<dbReference type="Proteomes" id="UP000694570">
    <property type="component" value="Unplaced"/>
</dbReference>
<dbReference type="Proteomes" id="UP000694571">
    <property type="component" value="Unplaced"/>
</dbReference>
<dbReference type="Proteomes" id="UP000694720">
    <property type="component" value="Unplaced"/>
</dbReference>
<dbReference type="Proteomes" id="UP000694722">
    <property type="component" value="Unplaced"/>
</dbReference>
<dbReference type="Proteomes" id="UP000694723">
    <property type="component" value="Unplaced"/>
</dbReference>
<dbReference type="Proteomes" id="UP000694724">
    <property type="component" value="Unplaced"/>
</dbReference>
<dbReference type="Proteomes" id="UP000694725">
    <property type="component" value="Unplaced"/>
</dbReference>
<dbReference type="Proteomes" id="UP000694726">
    <property type="component" value="Unplaced"/>
</dbReference>
<dbReference type="Proteomes" id="UP000694727">
    <property type="component" value="Unplaced"/>
</dbReference>
<dbReference type="Proteomes" id="UP000694728">
    <property type="component" value="Unplaced"/>
</dbReference>
<dbReference type="GO" id="GO:0031012">
    <property type="term" value="C:extracellular matrix"/>
    <property type="evidence" value="ECO:0000318"/>
    <property type="project" value="GO_Central"/>
</dbReference>
<dbReference type="GO" id="GO:0005576">
    <property type="term" value="C:extracellular region"/>
    <property type="evidence" value="ECO:0007669"/>
    <property type="project" value="UniProtKB-KW"/>
</dbReference>
<dbReference type="GO" id="GO:0030345">
    <property type="term" value="F:structural constituent of tooth enamel"/>
    <property type="evidence" value="ECO:0000318"/>
    <property type="project" value="GO_Central"/>
</dbReference>
<dbReference type="GO" id="GO:0036305">
    <property type="term" value="P:ameloblast differentiation"/>
    <property type="evidence" value="ECO:0000318"/>
    <property type="project" value="GO_Central"/>
</dbReference>
<dbReference type="GO" id="GO:0097186">
    <property type="term" value="P:amelogenesis"/>
    <property type="evidence" value="ECO:0000318"/>
    <property type="project" value="GO_Central"/>
</dbReference>
<dbReference type="GO" id="GO:0031214">
    <property type="term" value="P:biomineral tissue development"/>
    <property type="evidence" value="ECO:0007669"/>
    <property type="project" value="UniProtKB-KW"/>
</dbReference>
<dbReference type="GO" id="GO:0070175">
    <property type="term" value="P:positive regulation of enamel mineralization"/>
    <property type="evidence" value="ECO:0000318"/>
    <property type="project" value="GO_Central"/>
</dbReference>
<dbReference type="InterPro" id="IPR015673">
    <property type="entry name" value="Enamelin"/>
</dbReference>
<dbReference type="PANTHER" id="PTHR16784">
    <property type="entry name" value="ENAMELIN"/>
    <property type="match status" value="1"/>
</dbReference>
<dbReference type="PANTHER" id="PTHR16784:SF2">
    <property type="entry name" value="ENAMELIN"/>
    <property type="match status" value="1"/>
</dbReference>
<dbReference type="Pfam" id="PF15362">
    <property type="entry name" value="Enamelin"/>
    <property type="match status" value="1"/>
</dbReference>
<reference key="1">
    <citation type="journal article" date="1997" name="J. Dent. Res.">
        <title>Cloning and characterization of porcine enamelin mRNAs.</title>
        <authorList>
            <person name="Hu C.-C."/>
            <person name="Fukae M."/>
            <person name="Uchida T."/>
            <person name="Qian Q."/>
            <person name="Zhang C.H."/>
            <person name="Ryu O.H."/>
            <person name="Tanabe T."/>
            <person name="Yamakoshi Y."/>
            <person name="Murakami C."/>
            <person name="Dohi N."/>
            <person name="Shimizu M."/>
            <person name="Simmer J.P."/>
        </authorList>
    </citation>
    <scope>NUCLEOTIDE SEQUENCE [MRNA]</scope>
    <scope>TISSUE SPECIFICITY</scope>
    <scope>DEVELOPMENTAL STAGE</scope>
    <source>
        <tissue>Enamel epithelium</tissue>
    </source>
</reference>
<reference key="2">
    <citation type="journal article" date="1996" name="Adv. Dent. Res.">
        <title>Primary structure of the porcine 89 kda enamelin.</title>
        <authorList>
            <person name="Fukae M."/>
            <person name="Tanabe T."/>
            <person name="Murakami D."/>
            <person name="Dohi N."/>
            <person name="Uchida T."/>
            <person name="Shimizu M."/>
        </authorList>
    </citation>
    <scope>NUCLEOTIDE SEQUENCE [MRNA] OF 39-773</scope>
    <scope>PROTEIN SEQUENCE OF 39-49; 174-276; 515-524; 535-578; 641-646; 663-665; 670-686; 740-750; 765-773 AND 833-848</scope>
    <scope>FUNCTION</scope>
    <scope>SUBCELLULAR LOCATION</scope>
    <scope>PHOSPHORYLATION AT SER-191 AND SER-216</scope>
    <scope>HYDROXYLATION AT PRO-547</scope>
    <scope>GLYCOSYLATION AT ASN-245; ASN-252 AND ASN-264</scope>
</reference>
<feature type="signal peptide" evidence="4">
    <location>
        <begin position="1"/>
        <end position="38"/>
    </location>
</feature>
<feature type="chain" id="PRO_0000021176" description="Enamelin">
    <location>
        <begin position="39"/>
        <end position="1142"/>
    </location>
</feature>
<feature type="chain" id="PRO_0000021177" description="89 kDa enamelin">
    <location>
        <begin position="39"/>
        <end position="665"/>
    </location>
</feature>
<feature type="chain" id="PRO_0000021178" description="142 kDa enamelin">
    <location>
        <begin position="39"/>
        <end status="unknown"/>
    </location>
</feature>
<feature type="chain" id="PRO_0000021179" description="155 kDa enamelin">
    <location>
        <begin position="39"/>
        <end status="unknown"/>
    </location>
</feature>
<feature type="chain" id="PRO_0000021180" description="56 kDa enamelin">
    <location>
        <begin position="39"/>
        <end status="unknown"/>
    </location>
</feature>
<feature type="chain" id="PRO_0000021181" description="32 kDa enamelin">
    <location>
        <begin position="174"/>
        <end position="276"/>
    </location>
</feature>
<feature type="propeptide" id="PRO_0000021182" evidence="4">
    <location>
        <begin position="277"/>
        <end position="514"/>
    </location>
</feature>
<feature type="chain" id="PRO_0000021183" description="25 kDa enamelin">
    <location>
        <begin position="515"/>
        <end position="665"/>
    </location>
</feature>
<feature type="propeptide" id="PRO_0000021184" evidence="4">
    <location>
        <begin position="666"/>
        <end position="669"/>
    </location>
</feature>
<feature type="chain" id="PRO_0000021185" description="34 kDa enamelin">
    <location>
        <begin position="670"/>
        <end status="unknown"/>
    </location>
</feature>
<feature type="region of interest" description="Disordered" evidence="3">
    <location>
        <begin position="90"/>
        <end position="347"/>
    </location>
</feature>
<feature type="region of interest" description="Disordered" evidence="3">
    <location>
        <begin position="374"/>
        <end position="513"/>
    </location>
</feature>
<feature type="region of interest" description="Disordered" evidence="3">
    <location>
        <begin position="543"/>
        <end position="587"/>
    </location>
</feature>
<feature type="region of interest" description="Disordered" evidence="3">
    <location>
        <begin position="603"/>
        <end position="662"/>
    </location>
</feature>
<feature type="region of interest" description="Disordered" evidence="3">
    <location>
        <begin position="787"/>
        <end position="820"/>
    </location>
</feature>
<feature type="region of interest" description="Disordered" evidence="3">
    <location>
        <begin position="921"/>
        <end position="965"/>
    </location>
</feature>
<feature type="region of interest" description="Disordered" evidence="3">
    <location>
        <begin position="1020"/>
        <end position="1049"/>
    </location>
</feature>
<feature type="compositionally biased region" description="Pro residues" evidence="3">
    <location>
        <begin position="128"/>
        <end position="148"/>
    </location>
</feature>
<feature type="compositionally biased region" description="Basic and acidic residues" evidence="3">
    <location>
        <begin position="223"/>
        <end position="234"/>
    </location>
</feature>
<feature type="compositionally biased region" description="Polar residues" evidence="3">
    <location>
        <begin position="243"/>
        <end position="303"/>
    </location>
</feature>
<feature type="compositionally biased region" description="Polar residues" evidence="3">
    <location>
        <begin position="381"/>
        <end position="395"/>
    </location>
</feature>
<feature type="compositionally biased region" description="Basic and acidic residues" evidence="3">
    <location>
        <begin position="431"/>
        <end position="442"/>
    </location>
</feature>
<feature type="compositionally biased region" description="Polar residues" evidence="3">
    <location>
        <begin position="453"/>
        <end position="467"/>
    </location>
</feature>
<feature type="compositionally biased region" description="Basic and acidic residues" evidence="3">
    <location>
        <begin position="570"/>
        <end position="582"/>
    </location>
</feature>
<feature type="compositionally biased region" description="Polar residues" evidence="3">
    <location>
        <begin position="787"/>
        <end position="816"/>
    </location>
</feature>
<feature type="compositionally biased region" description="Polar residues" evidence="3">
    <location>
        <begin position="952"/>
        <end position="965"/>
    </location>
</feature>
<feature type="modified residue" description="Phosphoserine" evidence="7">
    <location>
        <position position="53"/>
    </location>
</feature>
<feature type="modified residue" description="Phosphoserine" evidence="4">
    <location>
        <position position="191"/>
    </location>
</feature>
<feature type="modified residue" description="Phosphoserine" evidence="4">
    <location>
        <position position="216"/>
    </location>
</feature>
<feature type="modified residue" description="Hydroxyproline" evidence="4">
    <location>
        <position position="547"/>
    </location>
</feature>
<feature type="glycosylation site" description="N-linked (GlcNAc...) asparagine" evidence="4">
    <location>
        <position position="245"/>
    </location>
</feature>
<feature type="glycosylation site" description="N-linked (GlcNAc...) asparagine" evidence="4">
    <location>
        <position position="252"/>
    </location>
</feature>
<feature type="glycosylation site" description="N-linked (GlcNAc...) asparagine" evidence="4">
    <location>
        <position position="264"/>
    </location>
</feature>
<feature type="glycosylation site" description="N-linked (GlcNAc...) asparagine" evidence="2">
    <location>
        <position position="291"/>
    </location>
</feature>
<feature type="glycosylation site" description="N-linked (GlcNAc...) asparagine" evidence="2">
    <location>
        <position position="462"/>
    </location>
</feature>
<feature type="glycosylation site" description="N-linked (GlcNAc...) asparagine" evidence="2">
    <location>
        <position position="929"/>
    </location>
</feature>
<feature type="glycosylation site" description="N-linked (GlcNAc...) asparagine" evidence="2">
    <location>
        <position position="1040"/>
    </location>
</feature>
<feature type="sequence conflict" description="In Ref. 2; AA sequence." evidence="7" ref="2">
    <original>H</original>
    <variation>D</variation>
    <location>
        <position position="680"/>
    </location>
</feature>
<feature type="sequence conflict" description="In Ref. 2; AA sequence." evidence="7" ref="2">
    <original>RDH</original>
    <variation>TTI</variation>
    <location>
        <begin position="838"/>
        <end position="840"/>
    </location>
</feature>
<evidence type="ECO:0000250" key="1">
    <source>
        <dbReference type="UniProtKB" id="Q9NRM1"/>
    </source>
</evidence>
<evidence type="ECO:0000255" key="2"/>
<evidence type="ECO:0000256" key="3">
    <source>
        <dbReference type="SAM" id="MobiDB-lite"/>
    </source>
</evidence>
<evidence type="ECO:0000269" key="4">
    <source>
    </source>
</evidence>
<evidence type="ECO:0000269" key="5">
    <source>
    </source>
</evidence>
<evidence type="ECO:0000303" key="6">
    <source>
    </source>
</evidence>
<evidence type="ECO:0000305" key="7"/>
<comment type="function">
    <text evidence="4">Involved in the mineralization and structural organization of enamel. Involved in the extension of enamel during the secretory stage of dental enamel formation.</text>
</comment>
<comment type="subcellular location">
    <subcellularLocation>
        <location evidence="4">Secreted</location>
        <location evidence="4">Extracellular space</location>
        <location evidence="4">Extracellular matrix</location>
    </subcellularLocation>
</comment>
<comment type="tissue specificity">
    <text evidence="5">Expressed by secretory-phase ameloblasts. Intact enamelin and large-molecular-weight enamelins are limited to the most superficial layer of the developing enamel matrix, while low-molecular-weight enamelins are observed in deeper enamelin. Preferential localization among the crystallites in rod and interrod enamel.</text>
</comment>
<comment type="developmental stage">
    <text evidence="5">Expressed from late differentiation to the transition stage.</text>
</comment>
<comment type="PTM">
    <text evidence="4">Proteolytically cleaved into several smaller polypeptides. Cleavage of N-terminal region of enamelin occurs soon after secretion.</text>
</comment>
<comment type="PTM">
    <text evidence="1">Phosphorylated by FAM20C in vitro.</text>
</comment>
<keyword id="KW-0091">Biomineralization</keyword>
<keyword id="KW-0903">Direct protein sequencing</keyword>
<keyword id="KW-0272">Extracellular matrix</keyword>
<keyword id="KW-0325">Glycoprotein</keyword>
<keyword id="KW-0379">Hydroxylation</keyword>
<keyword id="KW-0597">Phosphoprotein</keyword>
<keyword id="KW-1185">Reference proteome</keyword>
<keyword id="KW-0964">Secreted</keyword>
<keyword id="KW-0732">Signal</keyword>
<proteinExistence type="evidence at protein level"/>
<name>ENAM_PIG</name>
<protein>
    <recommendedName>
        <fullName>Enamelin</fullName>
    </recommendedName>
    <component>
        <recommendedName>
            <fullName evidence="6">89 kDa enamelin</fullName>
        </recommendedName>
    </component>
    <component>
        <recommendedName>
            <fullName evidence="6">142 kDa enamelin</fullName>
        </recommendedName>
    </component>
    <component>
        <recommendedName>
            <fullName evidence="6">155 kDa enamelin</fullName>
        </recommendedName>
    </component>
    <component>
        <recommendedName>
            <fullName evidence="6">56 kDa enamelin</fullName>
        </recommendedName>
    </component>
    <component>
        <recommendedName>
            <fullName evidence="6">32 kDa enamelin</fullName>
        </recommendedName>
    </component>
    <component>
        <recommendedName>
            <fullName evidence="6">25 kDa enamelin</fullName>
        </recommendedName>
    </component>
    <component>
        <recommendedName>
            <fullName evidence="6">34 kDa enamelin</fullName>
        </recommendedName>
    </component>
</protein>
<gene>
    <name type="primary">ENAM</name>
</gene>